<organism>
    <name type="scientific">Rattus norvegicus</name>
    <name type="common">Rat</name>
    <dbReference type="NCBI Taxonomy" id="10116"/>
    <lineage>
        <taxon>Eukaryota</taxon>
        <taxon>Metazoa</taxon>
        <taxon>Chordata</taxon>
        <taxon>Craniata</taxon>
        <taxon>Vertebrata</taxon>
        <taxon>Euteleostomi</taxon>
        <taxon>Mammalia</taxon>
        <taxon>Eutheria</taxon>
        <taxon>Euarchontoglires</taxon>
        <taxon>Glires</taxon>
        <taxon>Rodentia</taxon>
        <taxon>Myomorpha</taxon>
        <taxon>Muroidea</taxon>
        <taxon>Muridae</taxon>
        <taxon>Murinae</taxon>
        <taxon>Rattus</taxon>
    </lineage>
</organism>
<evidence type="ECO:0000250" key="1"/>
<evidence type="ECO:0000255" key="2">
    <source>
        <dbReference type="PROSITE-ProRule" id="PRU00659"/>
    </source>
</evidence>
<evidence type="ECO:0000305" key="3"/>
<sequence>MDQSGVLLWVKAEPFIVGALQEPPPSKLSLHYLKKVAAYVRTRATERAYPRLYWPTWRHIACGKLQLAKDLAWLYFEIFDNLSERTPEERLEWSEILSNCTTKDEVEKQRNQLSVDTLQFLLFLYIQQLNKISLRTSFIGEEWPSPRNRPKSPSPAERSSCHNKNWNDYNHQAFVCDHLSELLELLLDPEQLTESFHSTQSSLLSREAVTALSFLIEGTVSRTKKVYPLHELALWQPLHAANGFSKISKTFSLYKLEAWLRACLTTNPFGLSACLQSGKKLAWAHKVEGATKRAKIACNAHMAPRSHRIVVMSQVCNQTLAKSSETLVGAHVRAHRCNESFIYLLSPLRSMTIEKCRNSTFVLGPVETALHLHGCENLKVIAVCHRLSVSSTIGCTFHIMTPSRPLILSGNQTVTFAPFHTHYPMLEDHMARTGLATVPNYWDDPMVLGGEGTDTRVFQLLPPSEFYVFVTPFEMEGDTAEIPGGLPPAYQKALAHREQRIHNWQKTVKEARLTKEQRKQFQVLVENKFYEWLVSTGHRQQLDSLVPPPAASNQVAKKDLTWSHGALET</sequence>
<dbReference type="EMBL" id="BC089823">
    <property type="protein sequence ID" value="AAH89823.1"/>
    <property type="molecule type" value="mRNA"/>
</dbReference>
<dbReference type="RefSeq" id="NP_001012016.1">
    <property type="nucleotide sequence ID" value="NM_001012016.1"/>
</dbReference>
<dbReference type="RefSeq" id="XP_006248608.1">
    <property type="nucleotide sequence ID" value="XM_006248546.3"/>
</dbReference>
<dbReference type="RefSeq" id="XP_038944217.1">
    <property type="nucleotide sequence ID" value="XM_039088289.2"/>
</dbReference>
<dbReference type="SMR" id="Q5FVR8"/>
<dbReference type="FunCoup" id="Q5FVR8">
    <property type="interactions" value="2393"/>
</dbReference>
<dbReference type="STRING" id="10116.ENSRNOP00000072854"/>
<dbReference type="PhosphoSitePlus" id="Q5FVR8"/>
<dbReference type="PaxDb" id="10116-ENSRNOP00000036828"/>
<dbReference type="Ensembl" id="ENSRNOT00000111940.1">
    <property type="protein sequence ID" value="ENSRNOP00000088290.1"/>
    <property type="gene ID" value="ENSRNOG00000026458.6"/>
</dbReference>
<dbReference type="GeneID" id="303830"/>
<dbReference type="KEGG" id="rno:303830"/>
<dbReference type="UCSC" id="RGD:1309604">
    <property type="organism name" value="rat"/>
</dbReference>
<dbReference type="AGR" id="RGD:1309604"/>
<dbReference type="CTD" id="55171"/>
<dbReference type="RGD" id="1309604">
    <property type="gene designation" value="Tbccd1"/>
</dbReference>
<dbReference type="eggNOG" id="KOG4416">
    <property type="taxonomic scope" value="Eukaryota"/>
</dbReference>
<dbReference type="GeneTree" id="ENSGT00470000042284"/>
<dbReference type="InParanoid" id="Q5FVR8"/>
<dbReference type="OMA" id="VPNAWDQ"/>
<dbReference type="PhylomeDB" id="Q5FVR8"/>
<dbReference type="TreeFam" id="TF329418"/>
<dbReference type="PRO" id="PR:Q5FVR8"/>
<dbReference type="Proteomes" id="UP000002494">
    <property type="component" value="Chromosome 11"/>
</dbReference>
<dbReference type="Bgee" id="ENSRNOG00000026458">
    <property type="expression patterns" value="Expressed in testis and 18 other cell types or tissues"/>
</dbReference>
<dbReference type="GO" id="GO:0005737">
    <property type="term" value="C:cytoplasm"/>
    <property type="evidence" value="ECO:0007669"/>
    <property type="project" value="UniProtKB-KW"/>
</dbReference>
<dbReference type="GO" id="GO:0031616">
    <property type="term" value="C:spindle pole centrosome"/>
    <property type="evidence" value="ECO:0000250"/>
    <property type="project" value="UniProtKB"/>
</dbReference>
<dbReference type="GO" id="GO:0051661">
    <property type="term" value="P:maintenance of centrosome location"/>
    <property type="evidence" value="ECO:0000250"/>
    <property type="project" value="UniProtKB"/>
</dbReference>
<dbReference type="GO" id="GO:0051684">
    <property type="term" value="P:maintenance of Golgi location"/>
    <property type="evidence" value="ECO:0000250"/>
    <property type="project" value="UniProtKB"/>
</dbReference>
<dbReference type="GO" id="GO:0030334">
    <property type="term" value="P:regulation of cell migration"/>
    <property type="evidence" value="ECO:0000250"/>
    <property type="project" value="UniProtKB"/>
</dbReference>
<dbReference type="GO" id="GO:0008360">
    <property type="term" value="P:regulation of cell shape"/>
    <property type="evidence" value="ECO:0000250"/>
    <property type="project" value="UniProtKB"/>
</dbReference>
<dbReference type="Gene3D" id="2.160.20.70">
    <property type="match status" value="1"/>
</dbReference>
<dbReference type="InterPro" id="IPR017901">
    <property type="entry name" value="C-CAP_CF_C-like"/>
</dbReference>
<dbReference type="InterPro" id="IPR016098">
    <property type="entry name" value="CAP/MinC_C"/>
</dbReference>
<dbReference type="InterPro" id="IPR006599">
    <property type="entry name" value="CARP_motif"/>
</dbReference>
<dbReference type="InterPro" id="IPR039589">
    <property type="entry name" value="TBCC1"/>
</dbReference>
<dbReference type="InterPro" id="IPR012945">
    <property type="entry name" value="Tubulin-bd_cofactor_C_dom"/>
</dbReference>
<dbReference type="PANTHER" id="PTHR16052">
    <property type="entry name" value="TBCC DOMAIN-CONTAINING PROTEIN 1"/>
    <property type="match status" value="1"/>
</dbReference>
<dbReference type="PANTHER" id="PTHR16052:SF0">
    <property type="entry name" value="TBCC DOMAIN-CONTAINING PROTEIN 1"/>
    <property type="match status" value="1"/>
</dbReference>
<dbReference type="Pfam" id="PF07986">
    <property type="entry name" value="TBCC"/>
    <property type="match status" value="1"/>
</dbReference>
<dbReference type="SMART" id="SM00673">
    <property type="entry name" value="CARP"/>
    <property type="match status" value="2"/>
</dbReference>
<dbReference type="PROSITE" id="PS51329">
    <property type="entry name" value="C_CAP_COFACTOR_C"/>
    <property type="match status" value="1"/>
</dbReference>
<comment type="function">
    <text evidence="1">Plays a role in the regulation of centrosome and Golgi apparatus positioning, with consequences on cell shape and cell migration.</text>
</comment>
<comment type="subcellular location">
    <subcellularLocation>
        <location evidence="1">Cytoplasm</location>
        <location evidence="1">Cytoskeleton</location>
        <location evidence="1">Microtubule organizing center</location>
        <location evidence="1">Centrosome</location>
    </subcellularLocation>
    <subcellularLocation>
        <location evidence="1">Cytoplasm</location>
        <location evidence="1">Cytoskeleton</location>
        <location evidence="1">Spindle pole</location>
    </subcellularLocation>
    <text evidence="1">Localizes at the spindle midzone, midbody and basal bodies of primary and motile cilia.</text>
</comment>
<comment type="similarity">
    <text evidence="3">Belongs to the TBCC family.</text>
</comment>
<proteinExistence type="evidence at transcript level"/>
<protein>
    <recommendedName>
        <fullName>TBCC domain-containing protein 1</fullName>
    </recommendedName>
</protein>
<keyword id="KW-0963">Cytoplasm</keyword>
<keyword id="KW-0206">Cytoskeleton</keyword>
<keyword id="KW-1185">Reference proteome</keyword>
<gene>
    <name type="primary">Tbccd1</name>
</gene>
<name>TBCC1_RAT</name>
<feature type="chain" id="PRO_0000304946" description="TBCC domain-containing protein 1">
    <location>
        <begin position="1"/>
        <end position="569"/>
    </location>
</feature>
<feature type="domain" description="C-CAP/cofactor C-like" evidence="2">
    <location>
        <begin position="304"/>
        <end position="435"/>
    </location>
</feature>
<reference key="1">
    <citation type="journal article" date="2004" name="Genome Res.">
        <title>The status, quality, and expansion of the NIH full-length cDNA project: the Mammalian Gene Collection (MGC).</title>
        <authorList>
            <consortium name="The MGC Project Team"/>
        </authorList>
    </citation>
    <scope>NUCLEOTIDE SEQUENCE [LARGE SCALE MRNA]</scope>
    <source>
        <tissue>Testis</tissue>
    </source>
</reference>
<accession>Q5FVR8</accession>